<protein>
    <recommendedName>
        <fullName>3-hexulose-6-phosphate synthase 3</fullName>
        <shortName>HPS 3</shortName>
        <ecNumber>4.1.2.43</ecNumber>
    </recommendedName>
    <alternativeName>
        <fullName>D-arabino-3-hexulose-6-phosphate formaldehyde lyase 3</fullName>
    </alternativeName>
</protein>
<dbReference type="EC" id="4.1.2.43"/>
<dbReference type="EMBL" id="AP008934">
    <property type="protein sequence ID" value="BAE19293.1"/>
    <property type="molecule type" value="Genomic_DNA"/>
</dbReference>
<dbReference type="SMR" id="Q49VB7"/>
<dbReference type="GeneID" id="3616394"/>
<dbReference type="KEGG" id="ssp:SSP2148"/>
<dbReference type="PATRIC" id="fig|342451.11.peg.2139"/>
<dbReference type="eggNOG" id="COG0269">
    <property type="taxonomic scope" value="Bacteria"/>
</dbReference>
<dbReference type="HOGENOM" id="CLU_081825_1_0_9"/>
<dbReference type="OrthoDB" id="43475at2"/>
<dbReference type="UniPathway" id="UPA00294">
    <property type="reaction ID" value="UER00434"/>
</dbReference>
<dbReference type="Proteomes" id="UP000006371">
    <property type="component" value="Chromosome"/>
</dbReference>
<dbReference type="GO" id="GO:0033982">
    <property type="term" value="F:3-dehydro-L-gulonate-6-phosphate decarboxylase activity"/>
    <property type="evidence" value="ECO:0007669"/>
    <property type="project" value="TreeGrafter"/>
</dbReference>
<dbReference type="GO" id="GO:0043801">
    <property type="term" value="F:hexulose-6-phosphate synthase activity"/>
    <property type="evidence" value="ECO:0007669"/>
    <property type="project" value="UniProtKB-EC"/>
</dbReference>
<dbReference type="GO" id="GO:0004590">
    <property type="term" value="F:orotidine-5'-phosphate decarboxylase activity"/>
    <property type="evidence" value="ECO:0007669"/>
    <property type="project" value="InterPro"/>
</dbReference>
<dbReference type="GO" id="GO:0006207">
    <property type="term" value="P:'de novo' pyrimidine nucleobase biosynthetic process"/>
    <property type="evidence" value="ECO:0007669"/>
    <property type="project" value="InterPro"/>
</dbReference>
<dbReference type="GO" id="GO:0019647">
    <property type="term" value="P:formaldehyde assimilation via ribulose monophosphate cycle"/>
    <property type="evidence" value="ECO:0007669"/>
    <property type="project" value="UniProtKB-UniPathway"/>
</dbReference>
<dbReference type="GO" id="GO:0019854">
    <property type="term" value="P:L-ascorbic acid catabolic process"/>
    <property type="evidence" value="ECO:0007669"/>
    <property type="project" value="TreeGrafter"/>
</dbReference>
<dbReference type="GO" id="GO:0006730">
    <property type="term" value="P:one-carbon metabolic process"/>
    <property type="evidence" value="ECO:0007669"/>
    <property type="project" value="UniProtKB-KW"/>
</dbReference>
<dbReference type="CDD" id="cd04726">
    <property type="entry name" value="KGPDC_HPS"/>
    <property type="match status" value="1"/>
</dbReference>
<dbReference type="FunFam" id="3.20.20.70:FF:000022">
    <property type="entry name" value="3-keto-L-gulonate-6-phosphate decarboxylase UlaD"/>
    <property type="match status" value="1"/>
</dbReference>
<dbReference type="Gene3D" id="3.20.20.70">
    <property type="entry name" value="Aldolase class I"/>
    <property type="match status" value="1"/>
</dbReference>
<dbReference type="InterPro" id="IPR017553">
    <property type="entry name" value="3-hexulose-6-phosphate_synth"/>
</dbReference>
<dbReference type="InterPro" id="IPR013785">
    <property type="entry name" value="Aldolase_TIM"/>
</dbReference>
<dbReference type="InterPro" id="IPR041710">
    <property type="entry name" value="HPS/KGPDC"/>
</dbReference>
<dbReference type="InterPro" id="IPR001754">
    <property type="entry name" value="OMPdeCOase_dom"/>
</dbReference>
<dbReference type="InterPro" id="IPR011060">
    <property type="entry name" value="RibuloseP-bd_barrel"/>
</dbReference>
<dbReference type="NCBIfam" id="TIGR03128">
    <property type="entry name" value="RuMP_HxlA"/>
    <property type="match status" value="1"/>
</dbReference>
<dbReference type="PANTHER" id="PTHR35039">
    <property type="entry name" value="3-KETO-L-GULONATE-6-PHOSPHATE DECARBOXYLASE SGBH-RELATED"/>
    <property type="match status" value="1"/>
</dbReference>
<dbReference type="PANTHER" id="PTHR35039:SF3">
    <property type="entry name" value="3-KETO-L-GULONATE-6-PHOSPHATE DECARBOXYLASE SGBH-RELATED"/>
    <property type="match status" value="1"/>
</dbReference>
<dbReference type="Pfam" id="PF00215">
    <property type="entry name" value="OMPdecase"/>
    <property type="match status" value="1"/>
</dbReference>
<dbReference type="SMART" id="SM00934">
    <property type="entry name" value="OMPdecase"/>
    <property type="match status" value="1"/>
</dbReference>
<dbReference type="SUPFAM" id="SSF51366">
    <property type="entry name" value="Ribulose-phoshate binding barrel"/>
    <property type="match status" value="1"/>
</dbReference>
<accession>Q49VB7</accession>
<evidence type="ECO:0000250" key="1"/>
<evidence type="ECO:0000305" key="2"/>
<reference key="1">
    <citation type="journal article" date="2005" name="Proc. Natl. Acad. Sci. U.S.A.">
        <title>Whole genome sequence of Staphylococcus saprophyticus reveals the pathogenesis of uncomplicated urinary tract infection.</title>
        <authorList>
            <person name="Kuroda M."/>
            <person name="Yamashita A."/>
            <person name="Hirakawa H."/>
            <person name="Kumano M."/>
            <person name="Morikawa K."/>
            <person name="Higashide M."/>
            <person name="Maruyama A."/>
            <person name="Inose Y."/>
            <person name="Matoba K."/>
            <person name="Toh H."/>
            <person name="Kuhara S."/>
            <person name="Hattori M."/>
            <person name="Ohta T."/>
        </authorList>
    </citation>
    <scope>NUCLEOTIDE SEQUENCE [LARGE SCALE GENOMIC DNA]</scope>
    <source>
        <strain>ATCC 15305 / DSM 20229 / NCIMB 8711 / NCTC 7292 / S-41</strain>
    </source>
</reference>
<gene>
    <name type="ordered locus">SSP2148</name>
</gene>
<sequence>MELQLAIDLLNKEEAAELANKVKDYVDIVEIGTPIVINEGLPAVQYLNDNIDGVKVLADLKIMDAADYEVSQAVKFGADVVTILGVAEDASIKGAVEEAHKNGKELLVDMIAVQDLQKRAKELDELGADYIAVHTGYDLQAEGESPLESLRQVKSVINNSKVAVIGGIKPDTIKEVVAEEPDLVVVGGGIANADDPVAAAKACKDAIEGR</sequence>
<comment type="function">
    <text evidence="1">Catalyzes the condensation of ribulose 5-phosphate with formaldehyde to form 3-hexulose 6-phosphate.</text>
</comment>
<comment type="catalytic activity">
    <reaction>
        <text>D-ribulose 5-phosphate + formaldehyde = D-arabino-hex-3-ulose 6-phosphate</text>
        <dbReference type="Rhea" id="RHEA:25201"/>
        <dbReference type="ChEBI" id="CHEBI:16842"/>
        <dbReference type="ChEBI" id="CHEBI:58121"/>
        <dbReference type="ChEBI" id="CHEBI:58542"/>
        <dbReference type="EC" id="4.1.2.43"/>
    </reaction>
</comment>
<comment type="pathway">
    <text>One-carbon metabolism; formaldehyde assimilation via RuMP pathway; D-fructose 6-phosphate from D-ribulose 5-phosphate and formaldehyde: step 1/2.</text>
</comment>
<comment type="similarity">
    <text evidence="2">Belongs to the HPS/KGPDC family. HPS subfamily.</text>
</comment>
<name>HPS3_STAS1</name>
<keyword id="KW-0119">Carbohydrate metabolism</keyword>
<keyword id="KW-0456">Lyase</keyword>
<keyword id="KW-0554">One-carbon metabolism</keyword>
<keyword id="KW-1185">Reference proteome</keyword>
<proteinExistence type="inferred from homology"/>
<feature type="chain" id="PRO_0000269529" description="3-hexulose-6-phosphate synthase 3">
    <location>
        <begin position="1"/>
        <end position="210"/>
    </location>
</feature>
<organism>
    <name type="scientific">Staphylococcus saprophyticus subsp. saprophyticus (strain ATCC 15305 / DSM 20229 / NCIMB 8711 / NCTC 7292 / S-41)</name>
    <dbReference type="NCBI Taxonomy" id="342451"/>
    <lineage>
        <taxon>Bacteria</taxon>
        <taxon>Bacillati</taxon>
        <taxon>Bacillota</taxon>
        <taxon>Bacilli</taxon>
        <taxon>Bacillales</taxon>
        <taxon>Staphylococcaceae</taxon>
        <taxon>Staphylococcus</taxon>
    </lineage>
</organism>